<evidence type="ECO:0000255" key="1">
    <source>
        <dbReference type="HAMAP-Rule" id="MF_00518"/>
    </source>
</evidence>
<protein>
    <recommendedName>
        <fullName evidence="1">D-aminoacyl-tRNA deacylase</fullName>
        <shortName evidence="1">DTD</shortName>
        <ecNumber evidence="1">3.1.1.96</ecNumber>
    </recommendedName>
    <alternativeName>
        <fullName evidence="1">Gly-tRNA(Ala) deacylase</fullName>
    </alternativeName>
</protein>
<comment type="function">
    <text evidence="1">An aminoacyl-tRNA editing enzyme that deacylates mischarged D-aminoacyl-tRNAs. Also deacylates mischarged glycyl-tRNA(Ala), protecting cells against glycine mischarging by AlaRS. Acts via tRNA-based rather than protein-based catalysis; rejects L-amino acids rather than detecting D-amino acids in the active site. By recycling D-aminoacyl-tRNA to D-amino acids and free tRNA molecules, this enzyme counteracts the toxicity associated with the formation of D-aminoacyl-tRNA entities in vivo and helps enforce protein L-homochirality.</text>
</comment>
<comment type="catalytic activity">
    <reaction evidence="1">
        <text>glycyl-tRNA(Ala) + H2O = tRNA(Ala) + glycine + H(+)</text>
        <dbReference type="Rhea" id="RHEA:53744"/>
        <dbReference type="Rhea" id="RHEA-COMP:9657"/>
        <dbReference type="Rhea" id="RHEA-COMP:13640"/>
        <dbReference type="ChEBI" id="CHEBI:15377"/>
        <dbReference type="ChEBI" id="CHEBI:15378"/>
        <dbReference type="ChEBI" id="CHEBI:57305"/>
        <dbReference type="ChEBI" id="CHEBI:78442"/>
        <dbReference type="ChEBI" id="CHEBI:78522"/>
        <dbReference type="EC" id="3.1.1.96"/>
    </reaction>
</comment>
<comment type="catalytic activity">
    <reaction evidence="1">
        <text>a D-aminoacyl-tRNA + H2O = a tRNA + a D-alpha-amino acid + H(+)</text>
        <dbReference type="Rhea" id="RHEA:13953"/>
        <dbReference type="Rhea" id="RHEA-COMP:10123"/>
        <dbReference type="Rhea" id="RHEA-COMP:10124"/>
        <dbReference type="ChEBI" id="CHEBI:15377"/>
        <dbReference type="ChEBI" id="CHEBI:15378"/>
        <dbReference type="ChEBI" id="CHEBI:59871"/>
        <dbReference type="ChEBI" id="CHEBI:78442"/>
        <dbReference type="ChEBI" id="CHEBI:79333"/>
        <dbReference type="EC" id="3.1.1.96"/>
    </reaction>
</comment>
<comment type="subunit">
    <text evidence="1">Homodimer.</text>
</comment>
<comment type="subcellular location">
    <subcellularLocation>
        <location evidence="1">Cytoplasm</location>
    </subcellularLocation>
</comment>
<comment type="domain">
    <text evidence="1">A Gly-cisPro motif from one monomer fits into the active site of the other monomer to allow specific chiral rejection of L-amino acids.</text>
</comment>
<comment type="similarity">
    <text evidence="1">Belongs to the DTD family.</text>
</comment>
<proteinExistence type="inferred from homology"/>
<gene>
    <name evidence="1" type="primary">dtd</name>
    <name type="ordered locus">Amet_2354</name>
</gene>
<name>DTD_ALKMQ</name>
<feature type="chain" id="PRO_1000060903" description="D-aminoacyl-tRNA deacylase">
    <location>
        <begin position="1"/>
        <end position="149"/>
    </location>
</feature>
<feature type="short sequence motif" description="Gly-cisPro motif, important for rejection of L-amino acids" evidence="1">
    <location>
        <begin position="137"/>
        <end position="138"/>
    </location>
</feature>
<keyword id="KW-0963">Cytoplasm</keyword>
<keyword id="KW-0378">Hydrolase</keyword>
<keyword id="KW-1185">Reference proteome</keyword>
<keyword id="KW-0694">RNA-binding</keyword>
<keyword id="KW-0820">tRNA-binding</keyword>
<accession>A6TQP0</accession>
<sequence>MRAVVQRIKEGKVTVEGEITGECNFGLLVYLGVGREDTVEDAKYLAEKIVNLRIFEDQEEKLNLSVKDVGGSLLVISQFTLFGDCRKGRRPSFSEAAKPDEADYLYQEFVRCCNDVGMTVGTGVFQAHMMVHAINDGPVTMLIDSKKTF</sequence>
<dbReference type="EC" id="3.1.1.96" evidence="1"/>
<dbReference type="EMBL" id="CP000724">
    <property type="protein sequence ID" value="ABR48508.1"/>
    <property type="molecule type" value="Genomic_DNA"/>
</dbReference>
<dbReference type="RefSeq" id="WP_012063483.1">
    <property type="nucleotide sequence ID" value="NC_009633.1"/>
</dbReference>
<dbReference type="SMR" id="A6TQP0"/>
<dbReference type="STRING" id="293826.Amet_2354"/>
<dbReference type="KEGG" id="amt:Amet_2354"/>
<dbReference type="eggNOG" id="COG1490">
    <property type="taxonomic scope" value="Bacteria"/>
</dbReference>
<dbReference type="HOGENOM" id="CLU_076901_1_0_9"/>
<dbReference type="OrthoDB" id="9801395at2"/>
<dbReference type="Proteomes" id="UP000001572">
    <property type="component" value="Chromosome"/>
</dbReference>
<dbReference type="GO" id="GO:0005737">
    <property type="term" value="C:cytoplasm"/>
    <property type="evidence" value="ECO:0007669"/>
    <property type="project" value="UniProtKB-SubCell"/>
</dbReference>
<dbReference type="GO" id="GO:0051500">
    <property type="term" value="F:D-tyrosyl-tRNA(Tyr) deacylase activity"/>
    <property type="evidence" value="ECO:0007669"/>
    <property type="project" value="TreeGrafter"/>
</dbReference>
<dbReference type="GO" id="GO:0106026">
    <property type="term" value="F:Gly-tRNA(Ala) deacylase activity"/>
    <property type="evidence" value="ECO:0007669"/>
    <property type="project" value="UniProtKB-UniRule"/>
</dbReference>
<dbReference type="GO" id="GO:0043908">
    <property type="term" value="F:Ser(Gly)-tRNA(Ala) hydrolase activity"/>
    <property type="evidence" value="ECO:0007669"/>
    <property type="project" value="UniProtKB-UniRule"/>
</dbReference>
<dbReference type="GO" id="GO:0000049">
    <property type="term" value="F:tRNA binding"/>
    <property type="evidence" value="ECO:0007669"/>
    <property type="project" value="UniProtKB-UniRule"/>
</dbReference>
<dbReference type="GO" id="GO:0019478">
    <property type="term" value="P:D-amino acid catabolic process"/>
    <property type="evidence" value="ECO:0007669"/>
    <property type="project" value="UniProtKB-UniRule"/>
</dbReference>
<dbReference type="CDD" id="cd00563">
    <property type="entry name" value="Dtyr_deacylase"/>
    <property type="match status" value="1"/>
</dbReference>
<dbReference type="FunFam" id="3.50.80.10:FF:000001">
    <property type="entry name" value="D-aminoacyl-tRNA deacylase"/>
    <property type="match status" value="1"/>
</dbReference>
<dbReference type="Gene3D" id="3.50.80.10">
    <property type="entry name" value="D-tyrosyl-tRNA(Tyr) deacylase"/>
    <property type="match status" value="1"/>
</dbReference>
<dbReference type="HAMAP" id="MF_00518">
    <property type="entry name" value="Deacylase_Dtd"/>
    <property type="match status" value="1"/>
</dbReference>
<dbReference type="InterPro" id="IPR003732">
    <property type="entry name" value="Daa-tRNA_deacyls_DTD"/>
</dbReference>
<dbReference type="InterPro" id="IPR023509">
    <property type="entry name" value="DTD-like_sf"/>
</dbReference>
<dbReference type="NCBIfam" id="TIGR00256">
    <property type="entry name" value="D-aminoacyl-tRNA deacylase"/>
    <property type="match status" value="1"/>
</dbReference>
<dbReference type="PANTHER" id="PTHR10472:SF5">
    <property type="entry name" value="D-AMINOACYL-TRNA DEACYLASE 1"/>
    <property type="match status" value="1"/>
</dbReference>
<dbReference type="PANTHER" id="PTHR10472">
    <property type="entry name" value="D-TYROSYL-TRNA TYR DEACYLASE"/>
    <property type="match status" value="1"/>
</dbReference>
<dbReference type="Pfam" id="PF02580">
    <property type="entry name" value="Tyr_Deacylase"/>
    <property type="match status" value="1"/>
</dbReference>
<dbReference type="SUPFAM" id="SSF69500">
    <property type="entry name" value="DTD-like"/>
    <property type="match status" value="1"/>
</dbReference>
<organism>
    <name type="scientific">Alkaliphilus metalliredigens (strain QYMF)</name>
    <dbReference type="NCBI Taxonomy" id="293826"/>
    <lineage>
        <taxon>Bacteria</taxon>
        <taxon>Bacillati</taxon>
        <taxon>Bacillota</taxon>
        <taxon>Clostridia</taxon>
        <taxon>Peptostreptococcales</taxon>
        <taxon>Natronincolaceae</taxon>
        <taxon>Alkaliphilus</taxon>
    </lineage>
</organism>
<reference key="1">
    <citation type="journal article" date="2016" name="Genome Announc.">
        <title>Complete genome sequence of Alkaliphilus metalliredigens strain QYMF, an alkaliphilic and metal-reducing bacterium isolated from borax-contaminated leachate ponds.</title>
        <authorList>
            <person name="Hwang C."/>
            <person name="Copeland A."/>
            <person name="Lucas S."/>
            <person name="Lapidus A."/>
            <person name="Barry K."/>
            <person name="Detter J.C."/>
            <person name="Glavina Del Rio T."/>
            <person name="Hammon N."/>
            <person name="Israni S."/>
            <person name="Dalin E."/>
            <person name="Tice H."/>
            <person name="Pitluck S."/>
            <person name="Chertkov O."/>
            <person name="Brettin T."/>
            <person name="Bruce D."/>
            <person name="Han C."/>
            <person name="Schmutz J."/>
            <person name="Larimer F."/>
            <person name="Land M.L."/>
            <person name="Hauser L."/>
            <person name="Kyrpides N."/>
            <person name="Mikhailova N."/>
            <person name="Ye Q."/>
            <person name="Zhou J."/>
            <person name="Richardson P."/>
            <person name="Fields M.W."/>
        </authorList>
    </citation>
    <scope>NUCLEOTIDE SEQUENCE [LARGE SCALE GENOMIC DNA]</scope>
    <source>
        <strain>QYMF</strain>
    </source>
</reference>